<evidence type="ECO:0000255" key="1">
    <source>
        <dbReference type="PROSITE-ProRule" id="PRU00080"/>
    </source>
</evidence>
<evidence type="ECO:0000256" key="2">
    <source>
        <dbReference type="SAM" id="MobiDB-lite"/>
    </source>
</evidence>
<reference key="1">
    <citation type="journal article" date="2000" name="Nature">
        <title>Sequence and analysis of chromosome 1 of the plant Arabidopsis thaliana.</title>
        <authorList>
            <person name="Theologis A."/>
            <person name="Ecker J.R."/>
            <person name="Palm C.J."/>
            <person name="Federspiel N.A."/>
            <person name="Kaul S."/>
            <person name="White O."/>
            <person name="Alonso J."/>
            <person name="Altafi H."/>
            <person name="Araujo R."/>
            <person name="Bowman C.L."/>
            <person name="Brooks S.Y."/>
            <person name="Buehler E."/>
            <person name="Chan A."/>
            <person name="Chao Q."/>
            <person name="Chen H."/>
            <person name="Cheuk R.F."/>
            <person name="Chin C.W."/>
            <person name="Chung M.K."/>
            <person name="Conn L."/>
            <person name="Conway A.B."/>
            <person name="Conway A.R."/>
            <person name="Creasy T.H."/>
            <person name="Dewar K."/>
            <person name="Dunn P."/>
            <person name="Etgu P."/>
            <person name="Feldblyum T.V."/>
            <person name="Feng J.-D."/>
            <person name="Fong B."/>
            <person name="Fujii C.Y."/>
            <person name="Gill J.E."/>
            <person name="Goldsmith A.D."/>
            <person name="Haas B."/>
            <person name="Hansen N.F."/>
            <person name="Hughes B."/>
            <person name="Huizar L."/>
            <person name="Hunter J.L."/>
            <person name="Jenkins J."/>
            <person name="Johnson-Hopson C."/>
            <person name="Khan S."/>
            <person name="Khaykin E."/>
            <person name="Kim C.J."/>
            <person name="Koo H.L."/>
            <person name="Kremenetskaia I."/>
            <person name="Kurtz D.B."/>
            <person name="Kwan A."/>
            <person name="Lam B."/>
            <person name="Langin-Hooper S."/>
            <person name="Lee A."/>
            <person name="Lee J.M."/>
            <person name="Lenz C.A."/>
            <person name="Li J.H."/>
            <person name="Li Y.-P."/>
            <person name="Lin X."/>
            <person name="Liu S.X."/>
            <person name="Liu Z.A."/>
            <person name="Luros J.S."/>
            <person name="Maiti R."/>
            <person name="Marziali A."/>
            <person name="Militscher J."/>
            <person name="Miranda M."/>
            <person name="Nguyen M."/>
            <person name="Nierman W.C."/>
            <person name="Osborne B.I."/>
            <person name="Pai G."/>
            <person name="Peterson J."/>
            <person name="Pham P.K."/>
            <person name="Rizzo M."/>
            <person name="Rooney T."/>
            <person name="Rowley D."/>
            <person name="Sakano H."/>
            <person name="Salzberg S.L."/>
            <person name="Schwartz J.R."/>
            <person name="Shinn P."/>
            <person name="Southwick A.M."/>
            <person name="Sun H."/>
            <person name="Tallon L.J."/>
            <person name="Tambunga G."/>
            <person name="Toriumi M.J."/>
            <person name="Town C.D."/>
            <person name="Utterback T."/>
            <person name="Van Aken S."/>
            <person name="Vaysberg M."/>
            <person name="Vysotskaia V.S."/>
            <person name="Walker M."/>
            <person name="Wu D."/>
            <person name="Yu G."/>
            <person name="Fraser C.M."/>
            <person name="Venter J.C."/>
            <person name="Davis R.W."/>
        </authorList>
    </citation>
    <scope>NUCLEOTIDE SEQUENCE [LARGE SCALE GENOMIC DNA]</scope>
    <source>
        <strain>cv. Columbia</strain>
    </source>
</reference>
<reference key="2">
    <citation type="journal article" date="2017" name="Plant J.">
        <title>Araport11: a complete reannotation of the Arabidopsis thaliana reference genome.</title>
        <authorList>
            <person name="Cheng C.Y."/>
            <person name="Krishnakumar V."/>
            <person name="Chan A.P."/>
            <person name="Thibaud-Nissen F."/>
            <person name="Schobel S."/>
            <person name="Town C.D."/>
        </authorList>
    </citation>
    <scope>GENOME REANNOTATION</scope>
    <source>
        <strain>cv. Columbia</strain>
    </source>
</reference>
<feature type="chain" id="PRO_0000283169" description="Putative F-box/kelch-repeat protein At1g13200">
    <location>
        <begin position="1"/>
        <end position="435"/>
    </location>
</feature>
<feature type="domain" description="F-box" evidence="1">
    <location>
        <begin position="37"/>
        <end position="82"/>
    </location>
</feature>
<feature type="repeat" description="Kelch 1">
    <location>
        <begin position="164"/>
        <end position="217"/>
    </location>
</feature>
<feature type="repeat" description="Kelch 2">
    <location>
        <begin position="224"/>
        <end position="270"/>
    </location>
</feature>
<feature type="repeat" description="Kelch 3">
    <location>
        <begin position="273"/>
        <end position="317"/>
    </location>
</feature>
<feature type="repeat" description="Kelch 4">
    <location>
        <begin position="322"/>
        <end position="368"/>
    </location>
</feature>
<feature type="region of interest" description="Disordered" evidence="2">
    <location>
        <begin position="1"/>
        <end position="29"/>
    </location>
</feature>
<feature type="compositionally biased region" description="Basic residues" evidence="2">
    <location>
        <begin position="16"/>
        <end position="29"/>
    </location>
</feature>
<proteinExistence type="predicted"/>
<accession>Q9SAF4</accession>
<protein>
    <recommendedName>
        <fullName>Putative F-box/kelch-repeat protein At1g13200</fullName>
    </recommendedName>
</protein>
<organism>
    <name type="scientific">Arabidopsis thaliana</name>
    <name type="common">Mouse-ear cress</name>
    <dbReference type="NCBI Taxonomy" id="3702"/>
    <lineage>
        <taxon>Eukaryota</taxon>
        <taxon>Viridiplantae</taxon>
        <taxon>Streptophyta</taxon>
        <taxon>Embryophyta</taxon>
        <taxon>Tracheophyta</taxon>
        <taxon>Spermatophyta</taxon>
        <taxon>Magnoliopsida</taxon>
        <taxon>eudicotyledons</taxon>
        <taxon>Gunneridae</taxon>
        <taxon>Pentapetalae</taxon>
        <taxon>rosids</taxon>
        <taxon>malvids</taxon>
        <taxon>Brassicales</taxon>
        <taxon>Brassicaceae</taxon>
        <taxon>Camelineae</taxon>
        <taxon>Arabidopsis</taxon>
    </lineage>
</organism>
<sequence>MKDAEKREVIASSSLQRKRNRGRRLRKRRRRNEKRVLMVPSSLPNDVLEEIFLRFPVKALIRLKSLSKQWRSTIESRSFEERHLTIAKKAFVDHPKVMLVGEEDPIRGTGIRPDTDIGFRLFCLESASLLSFTRLNFPQGFFNWIYISESCDGLFCIHSPKSHSVYVVNPATRWLRLLPPAGFQILIHKFNPTEREWNVVMKSIFHLAFVKATDYKLVWLYNCDKYIVDASSPNVGVTKCEIFDFRKNAWRYLACTPSHQIFYYQKPASANGSVYWFTEPYNERIEVVAFDIQTETFRLLPKINPAIAGSDPHHIDMCTLDNSLCMSKREKDTMIQDIWRLKPSEDTWEKIFSIDLVSCPSSRTEKRDQFDWSKKDRVEPATPVAVCKNKKILLSHRYSRGLVKYDPLTKSIDFFSGHPTAYRKVIYFQSLISHL</sequence>
<keyword id="KW-0880">Kelch repeat</keyword>
<keyword id="KW-1185">Reference proteome</keyword>
<keyword id="KW-0677">Repeat</keyword>
<dbReference type="EMBL" id="AC007357">
    <property type="protein sequence ID" value="AAD31073.1"/>
    <property type="molecule type" value="Genomic_DNA"/>
</dbReference>
<dbReference type="EMBL" id="CP002684">
    <property type="protein sequence ID" value="AEE28984.1"/>
    <property type="molecule type" value="Genomic_DNA"/>
</dbReference>
<dbReference type="PIR" id="E86266">
    <property type="entry name" value="E86266"/>
</dbReference>
<dbReference type="RefSeq" id="NP_172779.1">
    <property type="nucleotide sequence ID" value="NM_101191.1"/>
</dbReference>
<dbReference type="SMR" id="Q9SAF4"/>
<dbReference type="FunCoup" id="Q9SAF4">
    <property type="interactions" value="3"/>
</dbReference>
<dbReference type="STRING" id="3702.Q9SAF4"/>
<dbReference type="PaxDb" id="3702-AT1G13200.1"/>
<dbReference type="EnsemblPlants" id="AT1G13200.1">
    <property type="protein sequence ID" value="AT1G13200.1"/>
    <property type="gene ID" value="AT1G13200"/>
</dbReference>
<dbReference type="GeneID" id="837880"/>
<dbReference type="Gramene" id="AT1G13200.1">
    <property type="protein sequence ID" value="AT1G13200.1"/>
    <property type="gene ID" value="AT1G13200"/>
</dbReference>
<dbReference type="KEGG" id="ath:AT1G13200"/>
<dbReference type="Araport" id="AT1G13200"/>
<dbReference type="TAIR" id="AT1G13200"/>
<dbReference type="eggNOG" id="ENOG502T151">
    <property type="taxonomic scope" value="Eukaryota"/>
</dbReference>
<dbReference type="HOGENOM" id="CLU_027176_4_2_1"/>
<dbReference type="InParanoid" id="Q9SAF4"/>
<dbReference type="OMA" id="VCIYMSG"/>
<dbReference type="PhylomeDB" id="Q9SAF4"/>
<dbReference type="PRO" id="PR:Q9SAF4"/>
<dbReference type="Proteomes" id="UP000006548">
    <property type="component" value="Chromosome 1"/>
</dbReference>
<dbReference type="ExpressionAtlas" id="Q9SAF4">
    <property type="expression patterns" value="baseline and differential"/>
</dbReference>
<dbReference type="CDD" id="cd22157">
    <property type="entry name" value="F-box_AtFBW1-like"/>
    <property type="match status" value="1"/>
</dbReference>
<dbReference type="Gene3D" id="1.20.1280.50">
    <property type="match status" value="1"/>
</dbReference>
<dbReference type="Gene3D" id="2.120.10.80">
    <property type="entry name" value="Kelch-type beta propeller"/>
    <property type="match status" value="1"/>
</dbReference>
<dbReference type="InterPro" id="IPR006527">
    <property type="entry name" value="F-box-assoc_dom_typ1"/>
</dbReference>
<dbReference type="InterPro" id="IPR017451">
    <property type="entry name" value="F-box-assoc_interact_dom"/>
</dbReference>
<dbReference type="InterPro" id="IPR036047">
    <property type="entry name" value="F-box-like_dom_sf"/>
</dbReference>
<dbReference type="InterPro" id="IPR001810">
    <property type="entry name" value="F-box_dom"/>
</dbReference>
<dbReference type="InterPro" id="IPR011043">
    <property type="entry name" value="Gal_Oxase/kelch_b-propeller"/>
</dbReference>
<dbReference type="InterPro" id="IPR015915">
    <property type="entry name" value="Kelch-typ_b-propeller"/>
</dbReference>
<dbReference type="InterPro" id="IPR050796">
    <property type="entry name" value="SCF_F-box_component"/>
</dbReference>
<dbReference type="NCBIfam" id="TIGR01640">
    <property type="entry name" value="F_box_assoc_1"/>
    <property type="match status" value="1"/>
</dbReference>
<dbReference type="PANTHER" id="PTHR31672">
    <property type="entry name" value="BNACNNG10540D PROTEIN"/>
    <property type="match status" value="1"/>
</dbReference>
<dbReference type="PANTHER" id="PTHR31672:SF13">
    <property type="entry name" value="F-BOX PROTEIN CPR30-LIKE"/>
    <property type="match status" value="1"/>
</dbReference>
<dbReference type="Pfam" id="PF00646">
    <property type="entry name" value="F-box"/>
    <property type="match status" value="1"/>
</dbReference>
<dbReference type="Pfam" id="PF07734">
    <property type="entry name" value="FBA_1"/>
    <property type="match status" value="1"/>
</dbReference>
<dbReference type="SMART" id="SM00256">
    <property type="entry name" value="FBOX"/>
    <property type="match status" value="1"/>
</dbReference>
<dbReference type="SUPFAM" id="SSF81383">
    <property type="entry name" value="F-box domain"/>
    <property type="match status" value="1"/>
</dbReference>
<dbReference type="SUPFAM" id="SSF50965">
    <property type="entry name" value="Galactose oxidase, central domain"/>
    <property type="match status" value="1"/>
</dbReference>
<dbReference type="PROSITE" id="PS50181">
    <property type="entry name" value="FBOX"/>
    <property type="match status" value="1"/>
</dbReference>
<gene>
    <name type="ordered locus">At1g13200</name>
    <name type="ORF">F3F19.23</name>
</gene>
<name>FBK3_ARATH</name>